<proteinExistence type="evidence at protein level"/>
<feature type="initiator methionine" description="Removed" evidence="9">
    <location>
        <position position="1"/>
    </location>
</feature>
<feature type="chain" id="PRO_0000125579" description="U6 snRNA-associated Sm-like protein LSm7">
    <location>
        <begin position="2"/>
        <end position="103"/>
    </location>
</feature>
<feature type="domain" description="Sm" evidence="1">
    <location>
        <begin position="10"/>
        <end position="90"/>
    </location>
</feature>
<feature type="modified residue" description="N-acetylalanine" evidence="9">
    <location>
        <position position="2"/>
    </location>
</feature>
<reference key="1">
    <citation type="journal article" date="1999" name="EMBO J.">
        <title>A doughnut-shaped heteromer of human Sm-like proteins binds to the 3'-end of U6 snRNA, thereby facilitating U4/U6 duplex formation in vitro.</title>
        <authorList>
            <person name="Achsel T."/>
            <person name="Brahms H."/>
            <person name="Kastner B."/>
            <person name="Bachi A."/>
            <person name="Wilm M."/>
            <person name="Luehrmann R."/>
        </authorList>
    </citation>
    <scope>NUCLEOTIDE SEQUENCE [MRNA]</scope>
    <scope>PARTIAL PROTEIN SEQUENCE</scope>
    <scope>SUBUNIT</scope>
    <scope>FUNCTION</scope>
    <scope>SUBCELLULAR LOCATION</scope>
</reference>
<reference key="2">
    <citation type="journal article" date="2004" name="Nature">
        <title>The DNA sequence and biology of human chromosome 19.</title>
        <authorList>
            <person name="Grimwood J."/>
            <person name="Gordon L.A."/>
            <person name="Olsen A.S."/>
            <person name="Terry A."/>
            <person name="Schmutz J."/>
            <person name="Lamerdin J.E."/>
            <person name="Hellsten U."/>
            <person name="Goodstein D."/>
            <person name="Couronne O."/>
            <person name="Tran-Gyamfi M."/>
            <person name="Aerts A."/>
            <person name="Altherr M."/>
            <person name="Ashworth L."/>
            <person name="Bajorek E."/>
            <person name="Black S."/>
            <person name="Branscomb E."/>
            <person name="Caenepeel S."/>
            <person name="Carrano A.V."/>
            <person name="Caoile C."/>
            <person name="Chan Y.M."/>
            <person name="Christensen M."/>
            <person name="Cleland C.A."/>
            <person name="Copeland A."/>
            <person name="Dalin E."/>
            <person name="Dehal P."/>
            <person name="Denys M."/>
            <person name="Detter J.C."/>
            <person name="Escobar J."/>
            <person name="Flowers D."/>
            <person name="Fotopulos D."/>
            <person name="Garcia C."/>
            <person name="Georgescu A.M."/>
            <person name="Glavina T."/>
            <person name="Gomez M."/>
            <person name="Gonzales E."/>
            <person name="Groza M."/>
            <person name="Hammon N."/>
            <person name="Hawkins T."/>
            <person name="Haydu L."/>
            <person name="Ho I."/>
            <person name="Huang W."/>
            <person name="Israni S."/>
            <person name="Jett J."/>
            <person name="Kadner K."/>
            <person name="Kimball H."/>
            <person name="Kobayashi A."/>
            <person name="Larionov V."/>
            <person name="Leem S.-H."/>
            <person name="Lopez F."/>
            <person name="Lou Y."/>
            <person name="Lowry S."/>
            <person name="Malfatti S."/>
            <person name="Martinez D."/>
            <person name="McCready P.M."/>
            <person name="Medina C."/>
            <person name="Morgan J."/>
            <person name="Nelson K."/>
            <person name="Nolan M."/>
            <person name="Ovcharenko I."/>
            <person name="Pitluck S."/>
            <person name="Pollard M."/>
            <person name="Popkie A.P."/>
            <person name="Predki P."/>
            <person name="Quan G."/>
            <person name="Ramirez L."/>
            <person name="Rash S."/>
            <person name="Retterer J."/>
            <person name="Rodriguez A."/>
            <person name="Rogers S."/>
            <person name="Salamov A."/>
            <person name="Salazar A."/>
            <person name="She X."/>
            <person name="Smith D."/>
            <person name="Slezak T."/>
            <person name="Solovyev V."/>
            <person name="Thayer N."/>
            <person name="Tice H."/>
            <person name="Tsai M."/>
            <person name="Ustaszewska A."/>
            <person name="Vo N."/>
            <person name="Wagner M."/>
            <person name="Wheeler J."/>
            <person name="Wu K."/>
            <person name="Xie G."/>
            <person name="Yang J."/>
            <person name="Dubchak I."/>
            <person name="Furey T.S."/>
            <person name="DeJong P."/>
            <person name="Dickson M."/>
            <person name="Gordon D."/>
            <person name="Eichler E.E."/>
            <person name="Pennacchio L.A."/>
            <person name="Richardson P."/>
            <person name="Stubbs L."/>
            <person name="Rokhsar D.S."/>
            <person name="Myers R.M."/>
            <person name="Rubin E.M."/>
            <person name="Lucas S.M."/>
        </authorList>
    </citation>
    <scope>NUCLEOTIDE SEQUENCE [LARGE SCALE GENOMIC DNA]</scope>
</reference>
<reference key="3">
    <citation type="journal article" date="2004" name="Genome Res.">
        <title>The status, quality, and expansion of the NIH full-length cDNA project: the Mammalian Gene Collection (MGC).</title>
        <authorList>
            <consortium name="The MGC Project Team"/>
        </authorList>
    </citation>
    <scope>NUCLEOTIDE SEQUENCE [LARGE SCALE MRNA]</scope>
    <source>
        <tissue>B-cell</tissue>
    </source>
</reference>
<reference key="4">
    <citation type="journal article" date="2002" name="Oncogene">
        <title>Carcinogenesis and translational controls: TACC1 is down-regulated in human cancers and associates with mRNA regulators.</title>
        <authorList>
            <person name="Conte N."/>
            <person name="Charafe-Jauffret E."/>
            <person name="Delaval B."/>
            <person name="Adelaide J."/>
            <person name="Ginestier C."/>
            <person name="Geneix J."/>
            <person name="Isnardon D."/>
            <person name="Jacquemier J."/>
            <person name="Birnbaum D."/>
        </authorList>
    </citation>
    <scope>INTERACTION WITH TACC1</scope>
</reference>
<reference key="5">
    <citation type="journal article" date="2011" name="BMC Syst. Biol.">
        <title>Initial characterization of the human central proteome.</title>
        <authorList>
            <person name="Burkard T.R."/>
            <person name="Planyavsky M."/>
            <person name="Kaupe I."/>
            <person name="Breitwieser F.P."/>
            <person name="Buerckstuemmer T."/>
            <person name="Bennett K.L."/>
            <person name="Superti-Furga G."/>
            <person name="Colinge J."/>
        </authorList>
    </citation>
    <scope>IDENTIFICATION BY MASS SPECTROMETRY [LARGE SCALE ANALYSIS]</scope>
</reference>
<reference key="6">
    <citation type="journal article" date="2012" name="Proc. Natl. Acad. Sci. U.S.A.">
        <title>N-terminal acetylome analyses and functional insights of the N-terminal acetyltransferase NatB.</title>
        <authorList>
            <person name="Van Damme P."/>
            <person name="Lasa M."/>
            <person name="Polevoda B."/>
            <person name="Gazquez C."/>
            <person name="Elosegui-Artola A."/>
            <person name="Kim D.S."/>
            <person name="De Juan-Pardo E."/>
            <person name="Demeyer K."/>
            <person name="Hole K."/>
            <person name="Larrea E."/>
            <person name="Timmerman E."/>
            <person name="Prieto J."/>
            <person name="Arnesen T."/>
            <person name="Sherman F."/>
            <person name="Gevaert K."/>
            <person name="Aldabe R."/>
        </authorList>
    </citation>
    <scope>ACETYLATION [LARGE SCALE ANALYSIS] AT ALA-2</scope>
    <scope>CLEAVAGE OF INITIATOR METHIONINE [LARGE SCALE ANALYSIS]</scope>
    <scope>IDENTIFICATION BY MASS SPECTROMETRY [LARGE SCALE ANALYSIS]</scope>
</reference>
<reference key="7">
    <citation type="journal article" date="2015" name="Proteomics">
        <title>N-terminome analysis of the human mitochondrial proteome.</title>
        <authorList>
            <person name="Vaca Jacome A.S."/>
            <person name="Rabilloud T."/>
            <person name="Schaeffer-Reiss C."/>
            <person name="Rompais M."/>
            <person name="Ayoub D."/>
            <person name="Lane L."/>
            <person name="Bairoch A."/>
            <person name="Van Dorsselaer A."/>
            <person name="Carapito C."/>
        </authorList>
    </citation>
    <scope>IDENTIFICATION BY MASS SPECTROMETRY [LARGE SCALE ANALYSIS]</scope>
</reference>
<reference evidence="7" key="8">
    <citation type="journal article" date="2016" name="Science">
        <title>Molecular architecture of the human U4/U6.U5 tri-snRNP.</title>
        <authorList>
            <person name="Agafonov D.E."/>
            <person name="Kastner B."/>
            <person name="Dybkov O."/>
            <person name="Hofele R.V."/>
            <person name="Liu W.T."/>
            <person name="Urlaub H."/>
            <person name="Luhrmann R."/>
            <person name="Stark H."/>
        </authorList>
    </citation>
    <scope>STRUCTURE BY ELECTRON MICROSCOPY (7.00 ANGSTROMS)</scope>
    <scope>SUBCELLULAR LOCATION</scope>
    <scope>SUBUNIT</scope>
    <scope>IDENTIFICATION BY MASS SPECTROMETRY</scope>
</reference>
<reference evidence="8" key="9">
    <citation type="journal article" date="2017" name="Cell">
        <title>Cryo-EM Structure of a Pre-catalytic Human Spliceosome Primed for Activation.</title>
        <authorList>
            <person name="Bertram K."/>
            <person name="Agafonov D.E."/>
            <person name="Dybkov O."/>
            <person name="Haselbach D."/>
            <person name="Leelaram M.N."/>
            <person name="Will C.L."/>
            <person name="Urlaub H."/>
            <person name="Kastner B."/>
            <person name="Luhrmann R."/>
            <person name="Stark H."/>
        </authorList>
    </citation>
    <scope>STRUCTURE BY ELECTRON MICROSCOPY (4.50 ANGSTROMS)</scope>
    <scope>FUNCTION</scope>
    <scope>SUBCELLULAR LOCATION</scope>
    <scope>SUBUNIT</scope>
    <scope>IDENTIFICATION BY MASS SPECTROMETRY</scope>
</reference>
<dbReference type="EMBL" id="AF182293">
    <property type="protein sequence ID" value="AAD56231.1"/>
    <property type="molecule type" value="mRNA"/>
</dbReference>
<dbReference type="EMBL" id="AC005258">
    <property type="protein sequence ID" value="AAG45442.1"/>
    <property type="molecule type" value="Genomic_DNA"/>
</dbReference>
<dbReference type="EMBL" id="BC018621">
    <property type="protein sequence ID" value="AAH18621.1"/>
    <property type="molecule type" value="mRNA"/>
</dbReference>
<dbReference type="CCDS" id="CCDS45907.1"/>
<dbReference type="RefSeq" id="NP_057283.1">
    <property type="nucleotide sequence ID" value="NM_016199.3"/>
</dbReference>
<dbReference type="PDB" id="3JCR">
    <property type="method" value="EM"/>
    <property type="resolution" value="7.00 A"/>
    <property type="chains" value="7=1-103"/>
</dbReference>
<dbReference type="PDB" id="5O9Z">
    <property type="method" value="EM"/>
    <property type="resolution" value="4.50 A"/>
    <property type="chains" value="t=1-103"/>
</dbReference>
<dbReference type="PDB" id="6AH0">
    <property type="method" value="EM"/>
    <property type="resolution" value="5.70 A"/>
    <property type="chains" value="y=1-103"/>
</dbReference>
<dbReference type="PDB" id="6AHD">
    <property type="method" value="EM"/>
    <property type="resolution" value="3.80 A"/>
    <property type="chains" value="y=1-103"/>
</dbReference>
<dbReference type="PDB" id="6QW6">
    <property type="method" value="EM"/>
    <property type="resolution" value="2.92 A"/>
    <property type="chains" value="67=1-103"/>
</dbReference>
<dbReference type="PDB" id="6QX9">
    <property type="method" value="EM"/>
    <property type="resolution" value="3.28 A"/>
    <property type="chains" value="67=1-103"/>
</dbReference>
<dbReference type="PDB" id="7ABG">
    <property type="method" value="EM"/>
    <property type="resolution" value="7.80 A"/>
    <property type="chains" value="A2=1-103"/>
</dbReference>
<dbReference type="PDB" id="8H6E">
    <property type="method" value="EM"/>
    <property type="resolution" value="3.20 A"/>
    <property type="chains" value="6f=1-103"/>
</dbReference>
<dbReference type="PDB" id="8H6J">
    <property type="method" value="EM"/>
    <property type="resolution" value="3.25 A"/>
    <property type="chains" value="6f=1-103"/>
</dbReference>
<dbReference type="PDB" id="8H6K">
    <property type="method" value="EM"/>
    <property type="resolution" value="2.70 A"/>
    <property type="chains" value="6f=1-103"/>
</dbReference>
<dbReference type="PDB" id="8H6L">
    <property type="method" value="EM"/>
    <property type="resolution" value="2.60 A"/>
    <property type="chains" value="6f=1-103"/>
</dbReference>
<dbReference type="PDB" id="8QO9">
    <property type="method" value="EM"/>
    <property type="resolution" value="5.29 A"/>
    <property type="chains" value="67=1-103"/>
</dbReference>
<dbReference type="PDB" id="8QXD">
    <property type="method" value="EM"/>
    <property type="resolution" value="9.60 A"/>
    <property type="chains" value="67=1-103"/>
</dbReference>
<dbReference type="PDB" id="8QZS">
    <property type="method" value="EM"/>
    <property type="resolution" value="4.10 A"/>
    <property type="chains" value="67=1-103"/>
</dbReference>
<dbReference type="PDB" id="8R08">
    <property type="method" value="EM"/>
    <property type="resolution" value="6.10 A"/>
    <property type="chains" value="67=1-103"/>
</dbReference>
<dbReference type="PDB" id="8R09">
    <property type="method" value="EM"/>
    <property type="resolution" value="4.30 A"/>
    <property type="chains" value="67=1-103"/>
</dbReference>
<dbReference type="PDB" id="8R0A">
    <property type="method" value="EM"/>
    <property type="resolution" value="5.80 A"/>
    <property type="chains" value="67=1-103"/>
</dbReference>
<dbReference type="PDB" id="8R0B">
    <property type="method" value="EM"/>
    <property type="resolution" value="4.40 A"/>
    <property type="chains" value="67=1-103"/>
</dbReference>
<dbReference type="PDB" id="8RM5">
    <property type="method" value="EM"/>
    <property type="resolution" value="6.90 A"/>
    <property type="chains" value="67=1-103"/>
</dbReference>
<dbReference type="PDBsum" id="3JCR"/>
<dbReference type="PDBsum" id="5O9Z"/>
<dbReference type="PDBsum" id="6AH0"/>
<dbReference type="PDBsum" id="6AHD"/>
<dbReference type="PDBsum" id="6QW6"/>
<dbReference type="PDBsum" id="6QX9"/>
<dbReference type="PDBsum" id="7ABG"/>
<dbReference type="PDBsum" id="8H6E"/>
<dbReference type="PDBsum" id="8H6J"/>
<dbReference type="PDBsum" id="8H6K"/>
<dbReference type="PDBsum" id="8H6L"/>
<dbReference type="PDBsum" id="8QO9"/>
<dbReference type="PDBsum" id="8QXD"/>
<dbReference type="PDBsum" id="8QZS"/>
<dbReference type="PDBsum" id="8R08"/>
<dbReference type="PDBsum" id="8R09"/>
<dbReference type="PDBsum" id="8R0A"/>
<dbReference type="PDBsum" id="8R0B"/>
<dbReference type="PDBsum" id="8RM5"/>
<dbReference type="EMDB" id="EMD-11695"/>
<dbReference type="EMDB" id="EMD-18529"/>
<dbReference type="EMDB" id="EMD-18718"/>
<dbReference type="EMDB" id="EMD-18781"/>
<dbReference type="EMDB" id="EMD-18786"/>
<dbReference type="EMDB" id="EMD-18787"/>
<dbReference type="EMDB" id="EMD-18788"/>
<dbReference type="EMDB" id="EMD-18789"/>
<dbReference type="EMDB" id="EMD-19349"/>
<dbReference type="EMDB" id="EMD-34500"/>
<dbReference type="EMDB" id="EMD-34505"/>
<dbReference type="EMDB" id="EMD-34507"/>
<dbReference type="EMDB" id="EMD-34508"/>
<dbReference type="EMDB" id="EMD-3766"/>
<dbReference type="EMDB" id="EMD-4658"/>
<dbReference type="EMDB" id="EMD-4665"/>
<dbReference type="EMDB" id="EMD-9621"/>
<dbReference type="EMDB" id="EMD-9624"/>
<dbReference type="SMR" id="Q9UK45"/>
<dbReference type="BioGRID" id="119678">
    <property type="interactions" value="117"/>
</dbReference>
<dbReference type="ComplexPortal" id="CPX-2391">
    <property type="entry name" value="U4/U6.U5 small nuclear ribonucleoprotein complex"/>
</dbReference>
<dbReference type="CORUM" id="Q9UK45"/>
<dbReference type="DIP" id="DIP-31129N"/>
<dbReference type="FunCoup" id="Q9UK45">
    <property type="interactions" value="1936"/>
</dbReference>
<dbReference type="IntAct" id="Q9UK45">
    <property type="interactions" value="68"/>
</dbReference>
<dbReference type="MINT" id="Q9UK45"/>
<dbReference type="STRING" id="9606.ENSP00000252622"/>
<dbReference type="iPTMnet" id="Q9UK45"/>
<dbReference type="MetOSite" id="Q9UK45"/>
<dbReference type="PhosphoSitePlus" id="Q9UK45"/>
<dbReference type="SwissPalm" id="Q9UK45"/>
<dbReference type="BioMuta" id="LSM7"/>
<dbReference type="DMDM" id="10720075"/>
<dbReference type="jPOST" id="Q9UK45"/>
<dbReference type="MassIVE" id="Q9UK45"/>
<dbReference type="PaxDb" id="9606-ENSP00000252622"/>
<dbReference type="PeptideAtlas" id="Q9UK45"/>
<dbReference type="ProteomicsDB" id="84717"/>
<dbReference type="Pumba" id="Q9UK45"/>
<dbReference type="TopDownProteomics" id="Q9UK45"/>
<dbReference type="Antibodypedia" id="42295">
    <property type="antibodies" value="142 antibodies from 22 providers"/>
</dbReference>
<dbReference type="DNASU" id="51690"/>
<dbReference type="Ensembl" id="ENST00000252622.15">
    <property type="protein sequence ID" value="ENSP00000252622.8"/>
    <property type="gene ID" value="ENSG00000130332.15"/>
</dbReference>
<dbReference type="GeneID" id="51690"/>
<dbReference type="KEGG" id="hsa:51690"/>
<dbReference type="MANE-Select" id="ENST00000252622.15">
    <property type="protein sequence ID" value="ENSP00000252622.8"/>
    <property type="RefSeq nucleotide sequence ID" value="NM_016199.3"/>
    <property type="RefSeq protein sequence ID" value="NP_057283.1"/>
</dbReference>
<dbReference type="UCSC" id="uc002lvp.5">
    <property type="organism name" value="human"/>
</dbReference>
<dbReference type="AGR" id="HGNC:20470"/>
<dbReference type="CTD" id="51690"/>
<dbReference type="DisGeNET" id="51690"/>
<dbReference type="GeneCards" id="LSM7"/>
<dbReference type="HGNC" id="HGNC:20470">
    <property type="gene designation" value="LSM7"/>
</dbReference>
<dbReference type="HPA" id="ENSG00000130332">
    <property type="expression patterns" value="Low tissue specificity"/>
</dbReference>
<dbReference type="MalaCards" id="LSM7"/>
<dbReference type="MIM" id="607287">
    <property type="type" value="gene"/>
</dbReference>
<dbReference type="neXtProt" id="NX_Q9UK45"/>
<dbReference type="OpenTargets" id="ENSG00000130332"/>
<dbReference type="PharmGKB" id="PA134888612"/>
<dbReference type="VEuPathDB" id="HostDB:ENSG00000130332"/>
<dbReference type="eggNOG" id="KOG1781">
    <property type="taxonomic scope" value="Eukaryota"/>
</dbReference>
<dbReference type="GeneTree" id="ENSGT00510000047872"/>
<dbReference type="HOGENOM" id="CLU_076902_3_1_1"/>
<dbReference type="InParanoid" id="Q9UK45"/>
<dbReference type="OMA" id="PFVQQEE"/>
<dbReference type="OrthoDB" id="2146at2759"/>
<dbReference type="PAN-GO" id="Q9UK45">
    <property type="GO annotations" value="7 GO annotations based on evolutionary models"/>
</dbReference>
<dbReference type="PhylomeDB" id="Q9UK45"/>
<dbReference type="TreeFam" id="TF314385"/>
<dbReference type="PathwayCommons" id="Q9UK45"/>
<dbReference type="Reactome" id="R-HSA-430039">
    <property type="pathway name" value="mRNA decay by 5' to 3' exoribonuclease"/>
</dbReference>
<dbReference type="Reactome" id="R-HSA-72163">
    <property type="pathway name" value="mRNA Splicing - Major Pathway"/>
</dbReference>
<dbReference type="SignaLink" id="Q9UK45"/>
<dbReference type="SIGNOR" id="Q9UK45"/>
<dbReference type="BioGRID-ORCS" id="51690">
    <property type="hits" value="841 hits in 1164 CRISPR screens"/>
</dbReference>
<dbReference type="CD-CODE" id="232F8A39">
    <property type="entry name" value="P-body"/>
</dbReference>
<dbReference type="ChiTaRS" id="LSM7">
    <property type="organism name" value="human"/>
</dbReference>
<dbReference type="GeneWiki" id="LSM7"/>
<dbReference type="GenomeRNAi" id="51690"/>
<dbReference type="Pharos" id="Q9UK45">
    <property type="development level" value="Tbio"/>
</dbReference>
<dbReference type="PRO" id="PR:Q9UK45"/>
<dbReference type="Proteomes" id="UP000005640">
    <property type="component" value="Chromosome 19"/>
</dbReference>
<dbReference type="RNAct" id="Q9UK45">
    <property type="molecule type" value="protein"/>
</dbReference>
<dbReference type="Bgee" id="ENSG00000130332">
    <property type="expression patterns" value="Expressed in mucosa of transverse colon and 203 other cell types or tissues"/>
</dbReference>
<dbReference type="ExpressionAtlas" id="Q9UK45">
    <property type="expression patterns" value="baseline and differential"/>
</dbReference>
<dbReference type="GO" id="GO:0071013">
    <property type="term" value="C:catalytic step 2 spliceosome"/>
    <property type="evidence" value="ECO:0000318"/>
    <property type="project" value="GO_Central"/>
</dbReference>
<dbReference type="GO" id="GO:0005829">
    <property type="term" value="C:cytosol"/>
    <property type="evidence" value="ECO:0000304"/>
    <property type="project" value="Reactome"/>
</dbReference>
<dbReference type="GO" id="GO:1990726">
    <property type="term" value="C:Lsm1-7-Pat1 complex"/>
    <property type="evidence" value="ECO:0000318"/>
    <property type="project" value="GO_Central"/>
</dbReference>
<dbReference type="GO" id="GO:0120115">
    <property type="term" value="C:Lsm2-8 complex"/>
    <property type="evidence" value="ECO:0000314"/>
    <property type="project" value="UniProtKB"/>
</dbReference>
<dbReference type="GO" id="GO:0005654">
    <property type="term" value="C:nucleoplasm"/>
    <property type="evidence" value="ECO:0000304"/>
    <property type="project" value="Reactome"/>
</dbReference>
<dbReference type="GO" id="GO:0005634">
    <property type="term" value="C:nucleus"/>
    <property type="evidence" value="ECO:0000314"/>
    <property type="project" value="UniProtKB"/>
</dbReference>
<dbReference type="GO" id="GO:0097526">
    <property type="term" value="C:spliceosomal tri-snRNP complex"/>
    <property type="evidence" value="ECO:0000318"/>
    <property type="project" value="GO_Central"/>
</dbReference>
<dbReference type="GO" id="GO:0005689">
    <property type="term" value="C:U12-type spliceosomal complex"/>
    <property type="evidence" value="ECO:0000318"/>
    <property type="project" value="GO_Central"/>
</dbReference>
<dbReference type="GO" id="GO:0071005">
    <property type="term" value="C:U2-type precatalytic spliceosome"/>
    <property type="evidence" value="ECO:0000314"/>
    <property type="project" value="UniProtKB"/>
</dbReference>
<dbReference type="GO" id="GO:0071004">
    <property type="term" value="C:U2-type prespliceosome"/>
    <property type="evidence" value="ECO:0000318"/>
    <property type="project" value="GO_Central"/>
</dbReference>
<dbReference type="GO" id="GO:0046540">
    <property type="term" value="C:U4/U6 x U5 tri-snRNP complex"/>
    <property type="evidence" value="ECO:0000314"/>
    <property type="project" value="UniProtKB"/>
</dbReference>
<dbReference type="GO" id="GO:0005688">
    <property type="term" value="C:U6 snRNP"/>
    <property type="evidence" value="ECO:0000318"/>
    <property type="project" value="GO_Central"/>
</dbReference>
<dbReference type="GO" id="GO:0017070">
    <property type="term" value="F:U6 snRNA binding"/>
    <property type="evidence" value="ECO:0000303"/>
    <property type="project" value="UniProtKB"/>
</dbReference>
<dbReference type="GO" id="GO:0000398">
    <property type="term" value="P:mRNA splicing, via spliceosome"/>
    <property type="evidence" value="ECO:0000314"/>
    <property type="project" value="UniProtKB"/>
</dbReference>
<dbReference type="GO" id="GO:0000956">
    <property type="term" value="P:nuclear-transcribed mRNA catabolic process"/>
    <property type="evidence" value="ECO:0007669"/>
    <property type="project" value="InterPro"/>
</dbReference>
<dbReference type="CDD" id="cd01729">
    <property type="entry name" value="LSm7"/>
    <property type="match status" value="1"/>
</dbReference>
<dbReference type="FunFam" id="2.30.30.100:FF:000025">
    <property type="entry name" value="U6 snRNA-associated Sm-like protein LSm7"/>
    <property type="match status" value="1"/>
</dbReference>
<dbReference type="Gene3D" id="2.30.30.100">
    <property type="match status" value="1"/>
</dbReference>
<dbReference type="InterPro" id="IPR017132">
    <property type="entry name" value="Lsm7"/>
</dbReference>
<dbReference type="InterPro" id="IPR044641">
    <property type="entry name" value="Lsm7/SmG-like"/>
</dbReference>
<dbReference type="InterPro" id="IPR010920">
    <property type="entry name" value="LSM_dom_sf"/>
</dbReference>
<dbReference type="InterPro" id="IPR047575">
    <property type="entry name" value="Sm"/>
</dbReference>
<dbReference type="InterPro" id="IPR001163">
    <property type="entry name" value="Sm_dom_euk/arc"/>
</dbReference>
<dbReference type="PANTHER" id="PTHR10553">
    <property type="entry name" value="SMALL NUCLEAR RIBONUCLEOPROTEIN"/>
    <property type="match status" value="1"/>
</dbReference>
<dbReference type="PANTHER" id="PTHR10553:SF5">
    <property type="entry name" value="U6 SNRNA-ASSOCIATED SM-LIKE PROTEIN LSM7"/>
    <property type="match status" value="1"/>
</dbReference>
<dbReference type="Pfam" id="PF01423">
    <property type="entry name" value="LSM"/>
    <property type="match status" value="1"/>
</dbReference>
<dbReference type="PIRSF" id="PIRSF037188">
    <property type="entry name" value="U6_snRNA_Lsm7"/>
    <property type="match status" value="1"/>
</dbReference>
<dbReference type="SMART" id="SM00651">
    <property type="entry name" value="Sm"/>
    <property type="match status" value="1"/>
</dbReference>
<dbReference type="SUPFAM" id="SSF50182">
    <property type="entry name" value="Sm-like ribonucleoproteins"/>
    <property type="match status" value="1"/>
</dbReference>
<dbReference type="PROSITE" id="PS52002">
    <property type="entry name" value="SM"/>
    <property type="match status" value="1"/>
</dbReference>
<gene>
    <name type="primary">LSM7</name>
</gene>
<evidence type="ECO:0000255" key="1">
    <source>
        <dbReference type="PROSITE-ProRule" id="PRU01346"/>
    </source>
</evidence>
<evidence type="ECO:0000269" key="2">
    <source>
    </source>
</evidence>
<evidence type="ECO:0000269" key="3">
    <source>
    </source>
</evidence>
<evidence type="ECO:0000269" key="4">
    <source>
    </source>
</evidence>
<evidence type="ECO:0000269" key="5">
    <source>
    </source>
</evidence>
<evidence type="ECO:0000305" key="6"/>
<evidence type="ECO:0007744" key="7">
    <source>
        <dbReference type="PDB" id="3JCR"/>
    </source>
</evidence>
<evidence type="ECO:0007744" key="8">
    <source>
        <dbReference type="PDB" id="5O9Z"/>
    </source>
</evidence>
<evidence type="ECO:0007744" key="9">
    <source>
    </source>
</evidence>
<protein>
    <recommendedName>
        <fullName>U6 snRNA-associated Sm-like protein LSm7</fullName>
    </recommendedName>
</protein>
<comment type="function">
    <text evidence="2 5">Plays a role in pre-mRNA splicing as component of the U4/U6-U5 tri-snRNP complex that is involved in spliceosome assembly, and as component of the precatalytic spliceosome (spliceosome B complex) (PubMed:28781166). The heptameric LSM2-8 complex binds specifically to the 3'-terminal U-tract of U6 snRNA (PubMed:10523320).</text>
</comment>
<comment type="subunit">
    <text evidence="2 3 4 5">Component of the precatalytic spliceosome (spliceosome B complex) (PubMed:28781166). Component of the U4/U6-U5 tri-snRNP complex, a building block of the precatalytic spliceosome (spliceosome B complex) (PubMed:10523320, PubMed:26912367, PubMed:28781166). The U4/U6-U5 tri-snRNP complex is composed of the U4, U6 and U5 snRNAs and at least PRPF3, PRPF4, PRPF6, PRPF8, PRPF31, SNRNP200, TXNL4A, SNRNP40, SNRPB, SNRPD1, SNRPD2, SNRPD3, SNRPE, SNRPF, SNRPG, DDX23, CD2BP2, PPIH, SNU13, EFTUD2, SART1 and USP39, plus LSM2, LSM3, LSM4, LSM5, LSM6, LSM7 and LSM8 (PubMed:26912367). LSM2, LSM3, LSM4, LSM5, LSM6, LSM7 and LSM8 form a heptameric, ring-shaped subcomplex (the LSM2-8 complex) that is part of the U4/U6-U5 tri-snRNP complex and the precatalytic spliceosome (PubMed:10523320, PubMed:26912367, PubMed:28781166). Interacts with TACC1 (PubMed:12165861).</text>
</comment>
<comment type="interaction">
    <interactant intactId="EBI-348372">
        <id>Q9UK45</id>
    </interactant>
    <interactant intactId="EBI-742054">
        <id>Q96D03</id>
        <label>DDIT4L</label>
    </interactant>
    <organismsDiffer>false</organismsDiffer>
    <experiments>10</experiments>
</comment>
<comment type="interaction">
    <interactant intactId="EBI-348372">
        <id>Q9UK45</id>
    </interactant>
    <interactant intactId="EBI-347416">
        <id>Q9Y333</id>
        <label>LSM2</label>
    </interactant>
    <organismsDiffer>false</organismsDiffer>
    <experiments>15</experiments>
</comment>
<comment type="interaction">
    <interactant intactId="EBI-348372">
        <id>Q9UK45</id>
    </interactant>
    <interactant intactId="EBI-348239">
        <id>P62310</id>
        <label>LSM3</label>
    </interactant>
    <organismsDiffer>false</organismsDiffer>
    <experiments>11</experiments>
</comment>
<comment type="interaction">
    <interactant intactId="EBI-348372">
        <id>Q9UK45</id>
    </interactant>
    <interactant intactId="EBI-372521">
        <id>Q9Y4Z0</id>
        <label>LSM4</label>
    </interactant>
    <organismsDiffer>false</organismsDiffer>
    <experiments>13</experiments>
</comment>
<comment type="interaction">
    <interactant intactId="EBI-348372">
        <id>Q9UK45</id>
    </interactant>
    <interactant intactId="EBI-373007">
        <id>Q9Y4Y9</id>
        <label>LSM5</label>
    </interactant>
    <organismsDiffer>false</organismsDiffer>
    <experiments>20</experiments>
</comment>
<comment type="interaction">
    <interactant intactId="EBI-348372">
        <id>Q9UK45</id>
    </interactant>
    <interactant intactId="EBI-373310">
        <id>P62312</id>
        <label>LSM6</label>
    </interactant>
    <organismsDiffer>false</organismsDiffer>
    <experiments>7</experiments>
</comment>
<comment type="interaction">
    <interactant intactId="EBI-348372">
        <id>Q9UK45</id>
    </interactant>
    <interactant intactId="EBI-347779">
        <id>O95777</id>
        <label>LSM8</label>
    </interactant>
    <organismsDiffer>false</organismsDiffer>
    <experiments>3</experiments>
</comment>
<comment type="interaction">
    <interactant intactId="EBI-348372">
        <id>Q9UK45</id>
    </interactant>
    <interactant intactId="EBI-372789">
        <id>P62318</id>
        <label>SNRPD3</label>
    </interactant>
    <organismsDiffer>false</organismsDiffer>
    <experiments>3</experiments>
</comment>
<comment type="interaction">
    <interactant intactId="EBI-348372">
        <id>Q9UK45</id>
    </interactant>
    <interactant intactId="EBI-356900">
        <id>P62306</id>
        <label>SNRPF</label>
    </interactant>
    <organismsDiffer>false</organismsDiffer>
    <experiments>7</experiments>
</comment>
<comment type="interaction">
    <interactant intactId="EBI-348372">
        <id>Q9UK45</id>
    </interactant>
    <interactant intactId="EBI-745392">
        <id>Q9BSW7</id>
        <label>SYT17</label>
    </interactant>
    <organismsDiffer>false</organismsDiffer>
    <experiments>3</experiments>
</comment>
<comment type="interaction">
    <interactant intactId="EBI-348372">
        <id>Q9UK45</id>
    </interactant>
    <interactant intactId="EBI-624252">
        <id>O75410-1</id>
        <label>TACC1</label>
    </interactant>
    <organismsDiffer>false</organismsDiffer>
    <experiments>4</experiments>
</comment>
<comment type="interaction">
    <interactant intactId="EBI-348372">
        <id>Q9UK45</id>
    </interactant>
    <interactant intactId="EBI-624278">
        <id>O75410-6</id>
        <label>TACC1</label>
    </interactant>
    <organismsDiffer>false</organismsDiffer>
    <experiments>2</experiments>
</comment>
<comment type="interaction">
    <interactant intactId="EBI-348372">
        <id>Q9UK45</id>
    </interactant>
    <interactant intactId="EBI-727338">
        <id>O95988</id>
        <label>TCL1B</label>
    </interactant>
    <organismsDiffer>false</organismsDiffer>
    <experiments>3</experiments>
</comment>
<comment type="subcellular location">
    <subcellularLocation>
        <location evidence="2 4 5">Nucleus</location>
    </subcellularLocation>
</comment>
<comment type="similarity">
    <text evidence="6">Belongs to the snRNP Sm proteins family.</text>
</comment>
<organism>
    <name type="scientific">Homo sapiens</name>
    <name type="common">Human</name>
    <dbReference type="NCBI Taxonomy" id="9606"/>
    <lineage>
        <taxon>Eukaryota</taxon>
        <taxon>Metazoa</taxon>
        <taxon>Chordata</taxon>
        <taxon>Craniata</taxon>
        <taxon>Vertebrata</taxon>
        <taxon>Euteleostomi</taxon>
        <taxon>Mammalia</taxon>
        <taxon>Eutheria</taxon>
        <taxon>Euarchontoglires</taxon>
        <taxon>Primates</taxon>
        <taxon>Haplorrhini</taxon>
        <taxon>Catarrhini</taxon>
        <taxon>Hominidae</taxon>
        <taxon>Homo</taxon>
    </lineage>
</organism>
<keyword id="KW-0002">3D-structure</keyword>
<keyword id="KW-0007">Acetylation</keyword>
<keyword id="KW-0903">Direct protein sequencing</keyword>
<keyword id="KW-0507">mRNA processing</keyword>
<keyword id="KW-0508">mRNA splicing</keyword>
<keyword id="KW-0539">Nucleus</keyword>
<keyword id="KW-1267">Proteomics identification</keyword>
<keyword id="KW-1185">Reference proteome</keyword>
<keyword id="KW-0687">Ribonucleoprotein</keyword>
<keyword id="KW-0694">RNA-binding</keyword>
<keyword id="KW-0747">Spliceosome</keyword>
<name>LSM7_HUMAN</name>
<sequence>MADKEKKKKESILDLSKYIDKTIRVKFQGGREASGILKGFDPLLNLVLDGTIEYMRDPDDQYKLTEDTRQLGLVVCRGTSVVLICPQDGMEAIPNPFIQQQDA</sequence>
<accession>Q9UK45</accession>